<protein>
    <recommendedName>
        <fullName>Inner membrane protein YhiM</fullName>
    </recommendedName>
</protein>
<accession>P37630</accession>
<accession>P76704</accession>
<accession>Q2M7F3</accession>
<dbReference type="EMBL" id="U00039">
    <property type="protein sequence ID" value="AAB18467.1"/>
    <property type="status" value="ALT_INIT"/>
    <property type="molecule type" value="Genomic_DNA"/>
</dbReference>
<dbReference type="EMBL" id="U00096">
    <property type="protein sequence ID" value="AAC76516.4"/>
    <property type="molecule type" value="Genomic_DNA"/>
</dbReference>
<dbReference type="EMBL" id="AP009048">
    <property type="protein sequence ID" value="BAE77803.1"/>
    <property type="molecule type" value="Genomic_DNA"/>
</dbReference>
<dbReference type="PIR" id="S47711">
    <property type="entry name" value="S47711"/>
</dbReference>
<dbReference type="RefSeq" id="NP_417948.4">
    <property type="nucleotide sequence ID" value="NC_000913.3"/>
</dbReference>
<dbReference type="RefSeq" id="WP_001028905.1">
    <property type="nucleotide sequence ID" value="NZ_STEB01000004.1"/>
</dbReference>
<dbReference type="BioGRID" id="4261268">
    <property type="interactions" value="138"/>
</dbReference>
<dbReference type="FunCoup" id="P37630">
    <property type="interactions" value="78"/>
</dbReference>
<dbReference type="STRING" id="511145.b3491"/>
<dbReference type="TCDB" id="9.B.245.1.2">
    <property type="family name" value="the 10 tms uncharacterized duf2776 (duf2776) family"/>
</dbReference>
<dbReference type="PaxDb" id="511145-b3491"/>
<dbReference type="EnsemblBacteria" id="AAC76516">
    <property type="protein sequence ID" value="AAC76516"/>
    <property type="gene ID" value="b3491"/>
</dbReference>
<dbReference type="GeneID" id="947997"/>
<dbReference type="KEGG" id="ecj:JW5944"/>
<dbReference type="KEGG" id="eco:b3491"/>
<dbReference type="PATRIC" id="fig|511145.12.peg.3592"/>
<dbReference type="EchoBASE" id="EB2140"/>
<dbReference type="eggNOG" id="ENOG502ZA26">
    <property type="taxonomic scope" value="Bacteria"/>
</dbReference>
<dbReference type="HOGENOM" id="CLU_899389_0_0_6"/>
<dbReference type="InParanoid" id="P37630"/>
<dbReference type="OMA" id="RQIIHTY"/>
<dbReference type="OrthoDB" id="1934357at2"/>
<dbReference type="BioCyc" id="EcoCyc:MONOMER0-2489"/>
<dbReference type="PRO" id="PR:P37630"/>
<dbReference type="Proteomes" id="UP000000625">
    <property type="component" value="Chromosome"/>
</dbReference>
<dbReference type="GO" id="GO:0005886">
    <property type="term" value="C:plasma membrane"/>
    <property type="evidence" value="ECO:0000255"/>
    <property type="project" value="EcoCyc"/>
</dbReference>
<dbReference type="GO" id="GO:0071468">
    <property type="term" value="P:cellular response to acidic pH"/>
    <property type="evidence" value="ECO:0000315"/>
    <property type="project" value="EcoCyc"/>
</dbReference>
<dbReference type="GO" id="GO:0001659">
    <property type="term" value="P:temperature homeostasis"/>
    <property type="evidence" value="ECO:0000314"/>
    <property type="project" value="EcoCyc"/>
</dbReference>
<dbReference type="InterPro" id="IPR021240">
    <property type="entry name" value="DUF2776"/>
</dbReference>
<dbReference type="Pfam" id="PF10951">
    <property type="entry name" value="DUF2776"/>
    <property type="match status" value="1"/>
</dbReference>
<proteinExistence type="evidence at protein level"/>
<evidence type="ECO:0000255" key="1"/>
<evidence type="ECO:0000305" key="2"/>
<sequence length="350" mass="37657">MNIYIGWLFKLIPLIMGLICIALGGFVLESSGQSEYFVAGHVLISLAAICLALFTTAFIIISQLTRGVNTFYNTLFPIIGYAGSIITMIWGWALLAGNDVMADEFVAGHVIFGVGMIAACVSTVAASSGHFLLIPKNAAGSKSDGTPVQAYSSLIGNCLIAVPVLLTLLGFIWSITLLRSADITPHYVAGHVLLGLTAICACLIGLVATIVHQTRNTFSTKEHWLWCYWVIFLGSITVLQGIYVLVSSDASARLAPGIILICLGMICYSIFSKVWLLALVWRRTCSLANRIPMIPVFTCLFCLFLASFLAEMAQTDMGYFIPSRVLVGLGAVCFTLFSIVSILEAGSAKK</sequence>
<name>YHIM_ECOLI</name>
<feature type="chain" id="PRO_0000169564" description="Inner membrane protein YhiM">
    <location>
        <begin position="1"/>
        <end position="350"/>
    </location>
</feature>
<feature type="topological domain" description="Cytoplasmic" evidence="1">
    <location>
        <begin position="1"/>
        <end position="2"/>
    </location>
</feature>
<feature type="transmembrane region" description="Helical" evidence="1">
    <location>
        <begin position="3"/>
        <end position="23"/>
    </location>
</feature>
<feature type="topological domain" description="Periplasmic" evidence="1">
    <location>
        <begin position="24"/>
        <end position="41"/>
    </location>
</feature>
<feature type="transmembrane region" description="Helical" evidence="1">
    <location>
        <begin position="42"/>
        <end position="62"/>
    </location>
</feature>
<feature type="topological domain" description="Cytoplasmic" evidence="1">
    <location>
        <begin position="63"/>
        <end position="74"/>
    </location>
</feature>
<feature type="transmembrane region" description="Helical" evidence="1">
    <location>
        <begin position="75"/>
        <end position="95"/>
    </location>
</feature>
<feature type="topological domain" description="Periplasmic" evidence="1">
    <location>
        <begin position="96"/>
        <end position="104"/>
    </location>
</feature>
<feature type="transmembrane region" description="Helical" evidence="1">
    <location>
        <begin position="105"/>
        <end position="125"/>
    </location>
</feature>
<feature type="topological domain" description="Cytoplasmic" evidence="1">
    <location>
        <begin position="126"/>
        <end position="157"/>
    </location>
</feature>
<feature type="transmembrane region" description="Helical" evidence="1">
    <location>
        <begin position="158"/>
        <end position="178"/>
    </location>
</feature>
<feature type="topological domain" description="Periplasmic" evidence="1">
    <location>
        <begin position="179"/>
        <end position="190"/>
    </location>
</feature>
<feature type="transmembrane region" description="Helical" evidence="1">
    <location>
        <begin position="191"/>
        <end position="211"/>
    </location>
</feature>
<feature type="topological domain" description="Cytoplasmic" evidence="1">
    <location>
        <begin position="212"/>
        <end position="225"/>
    </location>
</feature>
<feature type="transmembrane region" description="Helical" evidence="1">
    <location>
        <begin position="226"/>
        <end position="246"/>
    </location>
</feature>
<feature type="topological domain" description="Periplasmic" evidence="1">
    <location>
        <begin position="247"/>
        <end position="257"/>
    </location>
</feature>
<feature type="transmembrane region" description="Helical" evidence="1">
    <location>
        <begin position="258"/>
        <end position="278"/>
    </location>
</feature>
<feature type="topological domain" description="Cytoplasmic" evidence="1">
    <location>
        <begin position="279"/>
        <end position="290"/>
    </location>
</feature>
<feature type="transmembrane region" description="Helical" evidence="1">
    <location>
        <begin position="291"/>
        <end position="311"/>
    </location>
</feature>
<feature type="topological domain" description="Periplasmic" evidence="1">
    <location>
        <begin position="312"/>
        <end position="324"/>
    </location>
</feature>
<feature type="transmembrane region" description="Helical" evidence="1">
    <location>
        <begin position="325"/>
        <end position="345"/>
    </location>
</feature>
<feature type="topological domain" description="Cytoplasmic" evidence="1">
    <location>
        <begin position="346"/>
        <end position="350"/>
    </location>
</feature>
<comment type="subcellular location">
    <subcellularLocation>
        <location>Cell inner membrane</location>
        <topology>Multi-pass membrane protein</topology>
    </subcellularLocation>
</comment>
<comment type="sequence caution" evidence="2">
    <conflict type="erroneous initiation">
        <sequence resource="EMBL-CDS" id="AAB18467"/>
    </conflict>
</comment>
<keyword id="KW-0997">Cell inner membrane</keyword>
<keyword id="KW-1003">Cell membrane</keyword>
<keyword id="KW-0472">Membrane</keyword>
<keyword id="KW-1185">Reference proteome</keyword>
<keyword id="KW-0812">Transmembrane</keyword>
<keyword id="KW-1133">Transmembrane helix</keyword>
<reference key="1">
    <citation type="journal article" date="1994" name="Nucleic Acids Res.">
        <title>Analysis of the Escherichia coli genome. V. DNA sequence of the region from 76.0 to 81.5 minutes.</title>
        <authorList>
            <person name="Sofia H.J."/>
            <person name="Burland V."/>
            <person name="Daniels D.L."/>
            <person name="Plunkett G. III"/>
            <person name="Blattner F.R."/>
        </authorList>
    </citation>
    <scope>NUCLEOTIDE SEQUENCE [LARGE SCALE GENOMIC DNA]</scope>
    <source>
        <strain>K12 / MG1655 / ATCC 47076</strain>
    </source>
</reference>
<reference key="2">
    <citation type="journal article" date="1997" name="Science">
        <title>The complete genome sequence of Escherichia coli K-12.</title>
        <authorList>
            <person name="Blattner F.R."/>
            <person name="Plunkett G. III"/>
            <person name="Bloch C.A."/>
            <person name="Perna N.T."/>
            <person name="Burland V."/>
            <person name="Riley M."/>
            <person name="Collado-Vides J."/>
            <person name="Glasner J.D."/>
            <person name="Rode C.K."/>
            <person name="Mayhew G.F."/>
            <person name="Gregor J."/>
            <person name="Davis N.W."/>
            <person name="Kirkpatrick H.A."/>
            <person name="Goeden M.A."/>
            <person name="Rose D.J."/>
            <person name="Mau B."/>
            <person name="Shao Y."/>
        </authorList>
    </citation>
    <scope>NUCLEOTIDE SEQUENCE [LARGE SCALE GENOMIC DNA]</scope>
    <source>
        <strain>K12 / MG1655 / ATCC 47076</strain>
    </source>
</reference>
<reference key="3">
    <citation type="journal article" date="2006" name="Mol. Syst. Biol.">
        <title>Highly accurate genome sequences of Escherichia coli K-12 strains MG1655 and W3110.</title>
        <authorList>
            <person name="Hayashi K."/>
            <person name="Morooka N."/>
            <person name="Yamamoto Y."/>
            <person name="Fujita K."/>
            <person name="Isono K."/>
            <person name="Choi S."/>
            <person name="Ohtsubo E."/>
            <person name="Baba T."/>
            <person name="Wanner B.L."/>
            <person name="Mori H."/>
            <person name="Horiuchi T."/>
        </authorList>
    </citation>
    <scope>NUCLEOTIDE SEQUENCE [LARGE SCALE GENOMIC DNA]</scope>
    <source>
        <strain>K12 / W3110 / ATCC 27325 / DSM 5911</strain>
    </source>
</reference>
<reference key="4">
    <citation type="journal article" date="2005" name="Science">
        <title>Global topology analysis of the Escherichia coli inner membrane proteome.</title>
        <authorList>
            <person name="Daley D.O."/>
            <person name="Rapp M."/>
            <person name="Granseth E."/>
            <person name="Melen K."/>
            <person name="Drew D."/>
            <person name="von Heijne G."/>
        </authorList>
    </citation>
    <scope>TOPOLOGY [LARGE SCALE ANALYSIS]</scope>
    <source>
        <strain>K12 / MG1655 / ATCC 47076</strain>
    </source>
</reference>
<organism>
    <name type="scientific">Escherichia coli (strain K12)</name>
    <dbReference type="NCBI Taxonomy" id="83333"/>
    <lineage>
        <taxon>Bacteria</taxon>
        <taxon>Pseudomonadati</taxon>
        <taxon>Pseudomonadota</taxon>
        <taxon>Gammaproteobacteria</taxon>
        <taxon>Enterobacterales</taxon>
        <taxon>Enterobacteriaceae</taxon>
        <taxon>Escherichia</taxon>
    </lineage>
</organism>
<gene>
    <name type="primary">yhiM</name>
    <name type="ordered locus">b3491</name>
    <name type="ordered locus">JW5944</name>
</gene>